<organism>
    <name type="scientific">Lactococcus lactis subsp. lactis (strain IL1403)</name>
    <name type="common">Streptococcus lactis</name>
    <dbReference type="NCBI Taxonomy" id="272623"/>
    <lineage>
        <taxon>Bacteria</taxon>
        <taxon>Bacillati</taxon>
        <taxon>Bacillota</taxon>
        <taxon>Bacilli</taxon>
        <taxon>Lactobacillales</taxon>
        <taxon>Streptococcaceae</taxon>
        <taxon>Lactococcus</taxon>
    </lineage>
</organism>
<keyword id="KW-0030">Aminoacyl-tRNA synthetase</keyword>
<keyword id="KW-0067">ATP-binding</keyword>
<keyword id="KW-0963">Cytoplasm</keyword>
<keyword id="KW-0436">Ligase</keyword>
<keyword id="KW-0547">Nucleotide-binding</keyword>
<keyword id="KW-0648">Protein biosynthesis</keyword>
<keyword id="KW-1185">Reference proteome</keyword>
<keyword id="KW-0694">RNA-binding</keyword>
<keyword id="KW-0820">tRNA-binding</keyword>
<evidence type="ECO:0000250" key="1"/>
<evidence type="ECO:0000305" key="2"/>
<comment type="function">
    <text evidence="1">Is required not only for elongation of protein synthesis but also for the initiation of all mRNA translation through initiator tRNA(fMet) aminoacylation.</text>
</comment>
<comment type="catalytic activity">
    <reaction>
        <text>tRNA(Met) + L-methionine + ATP = L-methionyl-tRNA(Met) + AMP + diphosphate</text>
        <dbReference type="Rhea" id="RHEA:13481"/>
        <dbReference type="Rhea" id="RHEA-COMP:9667"/>
        <dbReference type="Rhea" id="RHEA-COMP:9698"/>
        <dbReference type="ChEBI" id="CHEBI:30616"/>
        <dbReference type="ChEBI" id="CHEBI:33019"/>
        <dbReference type="ChEBI" id="CHEBI:57844"/>
        <dbReference type="ChEBI" id="CHEBI:78442"/>
        <dbReference type="ChEBI" id="CHEBI:78530"/>
        <dbReference type="ChEBI" id="CHEBI:456215"/>
        <dbReference type="EC" id="6.1.1.10"/>
    </reaction>
</comment>
<comment type="subunit">
    <text evidence="1">Homodimer.</text>
</comment>
<comment type="subcellular location">
    <subcellularLocation>
        <location evidence="1">Cytoplasm</location>
    </subcellularLocation>
</comment>
<comment type="similarity">
    <text evidence="2">Belongs to the class-I aminoacyl-tRNA synthetase family. MetG type 2B subfamily.</text>
</comment>
<feature type="chain" id="PRO_0000139223" description="Methionine--tRNA ligase">
    <location>
        <begin position="1"/>
        <end position="662"/>
    </location>
</feature>
<feature type="domain" description="tRNA-binding">
    <location>
        <begin position="559"/>
        <end position="662"/>
    </location>
</feature>
<feature type="short sequence motif" description="'HIGH' region">
    <location>
        <begin position="14"/>
        <end position="24"/>
    </location>
</feature>
<feature type="short sequence motif" description="'KMSKS' region">
    <location>
        <begin position="308"/>
        <end position="312"/>
    </location>
</feature>
<feature type="binding site" evidence="1">
    <location>
        <position position="311"/>
    </location>
    <ligand>
        <name>ATP</name>
        <dbReference type="ChEBI" id="CHEBI:30616"/>
    </ligand>
</feature>
<protein>
    <recommendedName>
        <fullName>Methionine--tRNA ligase</fullName>
        <ecNumber>6.1.1.10</ecNumber>
    </recommendedName>
    <alternativeName>
        <fullName>Methionyl-tRNA synthetase</fullName>
        <shortName>MetRS</shortName>
    </alternativeName>
</protein>
<name>SYM_LACLA</name>
<accession>Q9CHE0</accession>
<proteinExistence type="inferred from homology"/>
<gene>
    <name type="primary">metG</name>
    <name type="synonym">metS</name>
    <name type="ordered locus">LL0792</name>
    <name type="ORF">L0353</name>
</gene>
<sequence>MTENKTFYITTPIYYPSGKLHLGSSYTTIACDVLARYKRLMGFDTFYLTGLDEHGMKIQRKAEELGMTPKEYLDPMAADVQELWKKLDISYDKFIRTTDTYHEEAVAKAFEQLLEQDDIYLGKYAGWYSVSDEEFFTETQLEEIFRDESGNITGGIAPSGHEVEWVEEETYFFRMGKYADWLLQYYDEHPDFIQPEVRKNEMVNNFIKPGLEDLALTRTSFTWGIPVPSNPKHVVYVWFDALLNYITALGYNSDNDSNFKKYWPGINMVGKEIVRFHTIYWPIMLHALGLPAPKKIFAHGWLLMKDGKMSKSKGNVVYPEMLIERYGLDAVRYYLMRAISFGQDGIFTPEDFVGRINFDLANDLGNLLNRTVSMINKYNDGKIEATGVSTEFDASLEEVVEETISHFHKAMDKFEFNVALADVWTLISRTNKYIDETAPWVLAKSEDDKAKLNNVLYHLAENLRIAGALLQPFMRATSGKIFEQLGMDERSFSLENLSFGYSFTHPVVAKGQPIFPRLDVEEEVAYIKLQMAGGVLPEKEWVPEEVELNLTLPQIKFDDFEKIELKVAEVLEVEPVEGSDKLLRFKLDAGDSEPRQILSGIAQFYPNEQELVGKKLQIVANLKPRKMMKKYVSQGMILSAEFDGKLSVLTVDDDVPAGSLIG</sequence>
<dbReference type="EC" id="6.1.1.10"/>
<dbReference type="EMBL" id="AE005176">
    <property type="protein sequence ID" value="AAK04890.1"/>
    <property type="molecule type" value="Genomic_DNA"/>
</dbReference>
<dbReference type="PIR" id="H86723">
    <property type="entry name" value="H86723"/>
</dbReference>
<dbReference type="RefSeq" id="NP_266948.1">
    <property type="nucleotide sequence ID" value="NC_002662.1"/>
</dbReference>
<dbReference type="SMR" id="Q9CHE0"/>
<dbReference type="PaxDb" id="272623-L0353"/>
<dbReference type="EnsemblBacteria" id="AAK04890">
    <property type="protein sequence ID" value="AAK04890"/>
    <property type="gene ID" value="L0353"/>
</dbReference>
<dbReference type="KEGG" id="lla:L0353"/>
<dbReference type="PATRIC" id="fig|272623.7.peg.847"/>
<dbReference type="eggNOG" id="COG0073">
    <property type="taxonomic scope" value="Bacteria"/>
</dbReference>
<dbReference type="eggNOG" id="COG0143">
    <property type="taxonomic scope" value="Bacteria"/>
</dbReference>
<dbReference type="HOGENOM" id="CLU_009710_9_4_9"/>
<dbReference type="OrthoDB" id="9810191at2"/>
<dbReference type="Proteomes" id="UP000002196">
    <property type="component" value="Chromosome"/>
</dbReference>
<dbReference type="GO" id="GO:0005737">
    <property type="term" value="C:cytoplasm"/>
    <property type="evidence" value="ECO:0007669"/>
    <property type="project" value="UniProtKB-SubCell"/>
</dbReference>
<dbReference type="GO" id="GO:0005524">
    <property type="term" value="F:ATP binding"/>
    <property type="evidence" value="ECO:0007669"/>
    <property type="project" value="UniProtKB-UniRule"/>
</dbReference>
<dbReference type="GO" id="GO:0004825">
    <property type="term" value="F:methionine-tRNA ligase activity"/>
    <property type="evidence" value="ECO:0007669"/>
    <property type="project" value="UniProtKB-UniRule"/>
</dbReference>
<dbReference type="GO" id="GO:0000049">
    <property type="term" value="F:tRNA binding"/>
    <property type="evidence" value="ECO:0007669"/>
    <property type="project" value="UniProtKB-KW"/>
</dbReference>
<dbReference type="GO" id="GO:0006431">
    <property type="term" value="P:methionyl-tRNA aminoacylation"/>
    <property type="evidence" value="ECO:0007669"/>
    <property type="project" value="UniProtKB-UniRule"/>
</dbReference>
<dbReference type="CDD" id="cd07957">
    <property type="entry name" value="Anticodon_Ia_Met"/>
    <property type="match status" value="1"/>
</dbReference>
<dbReference type="CDD" id="cd00814">
    <property type="entry name" value="MetRS_core"/>
    <property type="match status" value="1"/>
</dbReference>
<dbReference type="CDD" id="cd02800">
    <property type="entry name" value="tRNA_bind_EcMetRS_like"/>
    <property type="match status" value="1"/>
</dbReference>
<dbReference type="FunFam" id="1.10.730.10:FF:000026">
    <property type="entry name" value="Methionine--tRNA ligase"/>
    <property type="match status" value="1"/>
</dbReference>
<dbReference type="FunFam" id="2.170.220.10:FF:000002">
    <property type="entry name" value="Methionine--tRNA ligase"/>
    <property type="match status" value="1"/>
</dbReference>
<dbReference type="FunFam" id="2.40.50.140:FF:000042">
    <property type="entry name" value="Methionine--tRNA ligase"/>
    <property type="match status" value="1"/>
</dbReference>
<dbReference type="Gene3D" id="2.170.220.10">
    <property type="match status" value="1"/>
</dbReference>
<dbReference type="Gene3D" id="3.40.50.620">
    <property type="entry name" value="HUPs"/>
    <property type="match status" value="1"/>
</dbReference>
<dbReference type="Gene3D" id="1.10.730.10">
    <property type="entry name" value="Isoleucyl-tRNA Synthetase, Domain 1"/>
    <property type="match status" value="1"/>
</dbReference>
<dbReference type="Gene3D" id="2.40.50.140">
    <property type="entry name" value="Nucleic acid-binding proteins"/>
    <property type="match status" value="1"/>
</dbReference>
<dbReference type="HAMAP" id="MF_01228">
    <property type="entry name" value="Met_tRNA_synth_type2"/>
    <property type="match status" value="1"/>
</dbReference>
<dbReference type="InterPro" id="IPR041872">
    <property type="entry name" value="Anticodon_Met"/>
</dbReference>
<dbReference type="InterPro" id="IPR004495">
    <property type="entry name" value="Met-tRNA-synth_bsu_C"/>
</dbReference>
<dbReference type="InterPro" id="IPR014758">
    <property type="entry name" value="Met-tRNA_synth"/>
</dbReference>
<dbReference type="InterPro" id="IPR023457">
    <property type="entry name" value="Met-tRNA_synth_2"/>
</dbReference>
<dbReference type="InterPro" id="IPR015413">
    <property type="entry name" value="Methionyl/Leucyl_tRNA_Synth"/>
</dbReference>
<dbReference type="InterPro" id="IPR033911">
    <property type="entry name" value="MetRS_core"/>
</dbReference>
<dbReference type="InterPro" id="IPR012340">
    <property type="entry name" value="NA-bd_OB-fold"/>
</dbReference>
<dbReference type="InterPro" id="IPR014729">
    <property type="entry name" value="Rossmann-like_a/b/a_fold"/>
</dbReference>
<dbReference type="InterPro" id="IPR002547">
    <property type="entry name" value="tRNA-bd_dom"/>
</dbReference>
<dbReference type="InterPro" id="IPR009080">
    <property type="entry name" value="tRNAsynth_Ia_anticodon-bd"/>
</dbReference>
<dbReference type="NCBIfam" id="TIGR00398">
    <property type="entry name" value="metG"/>
    <property type="match status" value="1"/>
</dbReference>
<dbReference type="NCBIfam" id="TIGR00399">
    <property type="entry name" value="metG_C_term"/>
    <property type="match status" value="1"/>
</dbReference>
<dbReference type="NCBIfam" id="NF008900">
    <property type="entry name" value="PRK12267.1"/>
    <property type="match status" value="1"/>
</dbReference>
<dbReference type="PANTHER" id="PTHR43326:SF1">
    <property type="entry name" value="METHIONINE--TRNA LIGASE, MITOCHONDRIAL"/>
    <property type="match status" value="1"/>
</dbReference>
<dbReference type="PANTHER" id="PTHR43326">
    <property type="entry name" value="METHIONYL-TRNA SYNTHETASE"/>
    <property type="match status" value="1"/>
</dbReference>
<dbReference type="Pfam" id="PF19303">
    <property type="entry name" value="Anticodon_3"/>
    <property type="match status" value="1"/>
</dbReference>
<dbReference type="Pfam" id="PF09334">
    <property type="entry name" value="tRNA-synt_1g"/>
    <property type="match status" value="1"/>
</dbReference>
<dbReference type="Pfam" id="PF01588">
    <property type="entry name" value="tRNA_bind"/>
    <property type="match status" value="1"/>
</dbReference>
<dbReference type="PRINTS" id="PR01041">
    <property type="entry name" value="TRNASYNTHMET"/>
</dbReference>
<dbReference type="SUPFAM" id="SSF47323">
    <property type="entry name" value="Anticodon-binding domain of a subclass of class I aminoacyl-tRNA synthetases"/>
    <property type="match status" value="1"/>
</dbReference>
<dbReference type="SUPFAM" id="SSF50249">
    <property type="entry name" value="Nucleic acid-binding proteins"/>
    <property type="match status" value="1"/>
</dbReference>
<dbReference type="SUPFAM" id="SSF52374">
    <property type="entry name" value="Nucleotidylyl transferase"/>
    <property type="match status" value="1"/>
</dbReference>
<dbReference type="PROSITE" id="PS50886">
    <property type="entry name" value="TRBD"/>
    <property type="match status" value="1"/>
</dbReference>
<reference key="1">
    <citation type="journal article" date="2001" name="Genome Res.">
        <title>The complete genome sequence of the lactic acid bacterium Lactococcus lactis ssp. lactis IL1403.</title>
        <authorList>
            <person name="Bolotin A."/>
            <person name="Wincker P."/>
            <person name="Mauger S."/>
            <person name="Jaillon O."/>
            <person name="Malarme K."/>
            <person name="Weissenbach J."/>
            <person name="Ehrlich S.D."/>
            <person name="Sorokin A."/>
        </authorList>
    </citation>
    <scope>NUCLEOTIDE SEQUENCE [LARGE SCALE GENOMIC DNA]</scope>
    <source>
        <strain>IL1403</strain>
    </source>
</reference>